<reference key="1">
    <citation type="journal article" date="2002" name="Nucleic Acids Res.">
        <title>Genome sequence of Shigella flexneri 2a: insights into pathogenicity through comparison with genomes of Escherichia coli K12 and O157.</title>
        <authorList>
            <person name="Jin Q."/>
            <person name="Yuan Z."/>
            <person name="Xu J."/>
            <person name="Wang Y."/>
            <person name="Shen Y."/>
            <person name="Lu W."/>
            <person name="Wang J."/>
            <person name="Liu H."/>
            <person name="Yang J."/>
            <person name="Yang F."/>
            <person name="Zhang X."/>
            <person name="Zhang J."/>
            <person name="Yang G."/>
            <person name="Wu H."/>
            <person name="Qu D."/>
            <person name="Dong J."/>
            <person name="Sun L."/>
            <person name="Xue Y."/>
            <person name="Zhao A."/>
            <person name="Gao Y."/>
            <person name="Zhu J."/>
            <person name="Kan B."/>
            <person name="Ding K."/>
            <person name="Chen S."/>
            <person name="Cheng H."/>
            <person name="Yao Z."/>
            <person name="He B."/>
            <person name="Chen R."/>
            <person name="Ma D."/>
            <person name="Qiang B."/>
            <person name="Wen Y."/>
            <person name="Hou Y."/>
            <person name="Yu J."/>
        </authorList>
    </citation>
    <scope>NUCLEOTIDE SEQUENCE [LARGE SCALE GENOMIC DNA]</scope>
    <source>
        <strain>301 / Serotype 2a</strain>
    </source>
</reference>
<reference key="2">
    <citation type="journal article" date="2003" name="Infect. Immun.">
        <title>Complete genome sequence and comparative genomics of Shigella flexneri serotype 2a strain 2457T.</title>
        <authorList>
            <person name="Wei J."/>
            <person name="Goldberg M.B."/>
            <person name="Burland V."/>
            <person name="Venkatesan M.M."/>
            <person name="Deng W."/>
            <person name="Fournier G."/>
            <person name="Mayhew G.F."/>
            <person name="Plunkett G. III"/>
            <person name="Rose D.J."/>
            <person name="Darling A."/>
            <person name="Mau B."/>
            <person name="Perna N.T."/>
            <person name="Payne S.M."/>
            <person name="Runyen-Janecky L.J."/>
            <person name="Zhou S."/>
            <person name="Schwartz D.C."/>
            <person name="Blattner F.R."/>
        </authorList>
    </citation>
    <scope>NUCLEOTIDE SEQUENCE [LARGE SCALE GENOMIC DNA]</scope>
    <source>
        <strain>ATCC 700930 / 2457T / Serotype 2a</strain>
    </source>
</reference>
<sequence length="295" mass="33296">MSSSRPVFRSRWLPYLLVAPQLIITVIFFIWPAGEALWYSLQSVDPFGFSSQFVGLDNFVTLFHDSYYLDSFWTTIKFSTFVTVSGLLVSLFFAALVEYIVRGSRFYQTLMLLPYAVAPAVAAVLWIFLFNPGRGLITHFLAEFGYDWNHAQNSGQAMFLVVFASVWKQISYNFLFFYAALQSIPRSLIEAAAIDGAGPIRRFFKIALPLIAPVSFFLLVVNLVYAFFDTFPVIDAATSGGPVQATTTLIYKIYREGFTGLDLASSAAQSMVLMFLVIVLTVVQFRYVESKVRYQ</sequence>
<evidence type="ECO:0000250" key="1">
    <source>
        <dbReference type="UniProtKB" id="P10905"/>
    </source>
</evidence>
<evidence type="ECO:0000255" key="2"/>
<evidence type="ECO:0000255" key="3">
    <source>
        <dbReference type="PROSITE-ProRule" id="PRU00441"/>
    </source>
</evidence>
<evidence type="ECO:0000305" key="4"/>
<proteinExistence type="inferred from homology"/>
<dbReference type="EMBL" id="AE005674">
    <property type="protein sequence ID" value="AAN44929.1"/>
    <property type="molecule type" value="Genomic_DNA"/>
</dbReference>
<dbReference type="EMBL" id="AE014073">
    <property type="protein sequence ID" value="AAP19253.1"/>
    <property type="molecule type" value="Genomic_DNA"/>
</dbReference>
<dbReference type="RefSeq" id="NP_709222.1">
    <property type="nucleotide sequence ID" value="NC_004337.2"/>
</dbReference>
<dbReference type="RefSeq" id="WP_000099287.1">
    <property type="nucleotide sequence ID" value="NZ_WPGW01000010.1"/>
</dbReference>
<dbReference type="SMR" id="Q83PU6"/>
<dbReference type="STRING" id="198214.SF3470"/>
<dbReference type="PaxDb" id="198214-SF3470"/>
<dbReference type="GeneID" id="1026473"/>
<dbReference type="KEGG" id="sfl:SF3470"/>
<dbReference type="KEGG" id="sfx:S4293"/>
<dbReference type="PATRIC" id="fig|198214.7.peg.4090"/>
<dbReference type="HOGENOM" id="CLU_016047_0_2_6"/>
<dbReference type="Proteomes" id="UP000001006">
    <property type="component" value="Chromosome"/>
</dbReference>
<dbReference type="Proteomes" id="UP000002673">
    <property type="component" value="Chromosome"/>
</dbReference>
<dbReference type="GO" id="GO:0005886">
    <property type="term" value="C:plasma membrane"/>
    <property type="evidence" value="ECO:0007669"/>
    <property type="project" value="UniProtKB-SubCell"/>
</dbReference>
<dbReference type="GO" id="GO:0055085">
    <property type="term" value="P:transmembrane transport"/>
    <property type="evidence" value="ECO:0007669"/>
    <property type="project" value="InterPro"/>
</dbReference>
<dbReference type="CDD" id="cd06261">
    <property type="entry name" value="TM_PBP2"/>
    <property type="match status" value="1"/>
</dbReference>
<dbReference type="FunFam" id="1.10.3720.10:FF:000028">
    <property type="entry name" value="sn-glycerol-3-phosphate ABC transporter permease UgpA"/>
    <property type="match status" value="1"/>
</dbReference>
<dbReference type="Gene3D" id="1.10.3720.10">
    <property type="entry name" value="MetI-like"/>
    <property type="match status" value="1"/>
</dbReference>
<dbReference type="InterPro" id="IPR000515">
    <property type="entry name" value="MetI-like"/>
</dbReference>
<dbReference type="InterPro" id="IPR035906">
    <property type="entry name" value="MetI-like_sf"/>
</dbReference>
<dbReference type="InterPro" id="IPR050809">
    <property type="entry name" value="UgpAE/MalFG_permease"/>
</dbReference>
<dbReference type="NCBIfam" id="NF007852">
    <property type="entry name" value="PRK10561.1"/>
    <property type="match status" value="1"/>
</dbReference>
<dbReference type="PANTHER" id="PTHR43227">
    <property type="entry name" value="BLL4140 PROTEIN"/>
    <property type="match status" value="1"/>
</dbReference>
<dbReference type="PANTHER" id="PTHR43227:SF9">
    <property type="entry name" value="SN-GLYCEROL-3-PHOSPHATE TRANSPORT SYSTEM PERMEASE PROTEIN UGPA"/>
    <property type="match status" value="1"/>
</dbReference>
<dbReference type="Pfam" id="PF00528">
    <property type="entry name" value="BPD_transp_1"/>
    <property type="match status" value="1"/>
</dbReference>
<dbReference type="SUPFAM" id="SSF161098">
    <property type="entry name" value="MetI-like"/>
    <property type="match status" value="1"/>
</dbReference>
<dbReference type="PROSITE" id="PS50928">
    <property type="entry name" value="ABC_TM1"/>
    <property type="match status" value="1"/>
</dbReference>
<comment type="function">
    <text evidence="1">Part of the ABC transporter complex UgpBAEC involved in sn-glycerol-3-phosphate (G3P) import. Probably responsible for the translocation of the substrate across the membrane.</text>
</comment>
<comment type="subunit">
    <text evidence="1">The complex is composed of two ATP-binding proteins (UgpC), two transmembrane proteins (UgpA and UgpE) and a solute-binding protein (UgpB).</text>
</comment>
<comment type="subcellular location">
    <subcellularLocation>
        <location evidence="1">Cell inner membrane</location>
        <topology evidence="2">Multi-pass membrane protein</topology>
    </subcellularLocation>
</comment>
<comment type="similarity">
    <text evidence="4">Belongs to the binding-protein-dependent transport system permease family. UgpAE subfamily.</text>
</comment>
<name>UGPA_SHIFL</name>
<accession>Q83PU6</accession>
<accession>Q7BYU2</accession>
<organism>
    <name type="scientific">Shigella flexneri</name>
    <dbReference type="NCBI Taxonomy" id="623"/>
    <lineage>
        <taxon>Bacteria</taxon>
        <taxon>Pseudomonadati</taxon>
        <taxon>Pseudomonadota</taxon>
        <taxon>Gammaproteobacteria</taxon>
        <taxon>Enterobacterales</taxon>
        <taxon>Enterobacteriaceae</taxon>
        <taxon>Shigella</taxon>
    </lineage>
</organism>
<keyword id="KW-0997">Cell inner membrane</keyword>
<keyword id="KW-1003">Cell membrane</keyword>
<keyword id="KW-0472">Membrane</keyword>
<keyword id="KW-1185">Reference proteome</keyword>
<keyword id="KW-0812">Transmembrane</keyword>
<keyword id="KW-1133">Transmembrane helix</keyword>
<keyword id="KW-0813">Transport</keyword>
<gene>
    <name type="primary">ugpA</name>
    <name type="ordered locus">SF3470</name>
    <name type="ordered locus">S4293</name>
</gene>
<feature type="chain" id="PRO_0000292833" description="sn-glycerol-3-phosphate transport system permease protein UgpA">
    <location>
        <begin position="1"/>
        <end position="295"/>
    </location>
</feature>
<feature type="topological domain" description="Cytoplasmic" evidence="2">
    <location>
        <begin position="1"/>
        <end position="11"/>
    </location>
</feature>
<feature type="transmembrane region" description="Helical" evidence="3">
    <location>
        <begin position="12"/>
        <end position="32"/>
    </location>
</feature>
<feature type="topological domain" description="Periplasmic" evidence="2">
    <location>
        <begin position="33"/>
        <end position="80"/>
    </location>
</feature>
<feature type="transmembrane region" description="Helical" evidence="3">
    <location>
        <begin position="81"/>
        <end position="101"/>
    </location>
</feature>
<feature type="topological domain" description="Cytoplasmic" evidence="2">
    <location>
        <begin position="102"/>
        <end position="109"/>
    </location>
</feature>
<feature type="transmembrane region" description="Helical" evidence="3">
    <location>
        <begin position="110"/>
        <end position="130"/>
    </location>
</feature>
<feature type="topological domain" description="Periplasmic" evidence="2">
    <location>
        <begin position="131"/>
        <end position="156"/>
    </location>
</feature>
<feature type="transmembrane region" description="Helical" evidence="3">
    <location>
        <begin position="157"/>
        <end position="177"/>
    </location>
</feature>
<feature type="topological domain" description="Cytoplasmic" evidence="2">
    <location>
        <begin position="178"/>
        <end position="207"/>
    </location>
</feature>
<feature type="transmembrane region" description="Helical" evidence="3">
    <location>
        <begin position="208"/>
        <end position="228"/>
    </location>
</feature>
<feature type="topological domain" description="Periplasmic" evidence="2">
    <location>
        <begin position="229"/>
        <end position="262"/>
    </location>
</feature>
<feature type="transmembrane region" description="Helical" evidence="3">
    <location>
        <begin position="263"/>
        <end position="283"/>
    </location>
</feature>
<feature type="topological domain" description="Cytoplasmic" evidence="2">
    <location>
        <begin position="284"/>
        <end position="295"/>
    </location>
</feature>
<feature type="domain" description="ABC transmembrane type-1" evidence="3">
    <location>
        <begin position="76"/>
        <end position="284"/>
    </location>
</feature>
<protein>
    <recommendedName>
        <fullName evidence="1">sn-glycerol-3-phosphate transport system permease protein UgpA</fullName>
    </recommendedName>
</protein>